<sequence>MAPRSLYLLAVLLFSANLFAGVGFAAAAEGPEDKGLTKGGKGKGEKGTKVGADDTNGTDPDPEPEPEPEPEPEPEPEPEPEPEPEPEPEPEPEPEPEPEPEPEPEPEPEPEPEPEPEPEPEPGAATLKSVALPFAIAAAALVAAF</sequence>
<accession>Q06084</accession>
<evidence type="ECO:0000250" key="1"/>
<evidence type="ECO:0000256" key="2">
    <source>
        <dbReference type="SAM" id="MobiDB-lite"/>
    </source>
</evidence>
<proteinExistence type="evidence at transcript level"/>
<reference key="1">
    <citation type="journal article" date="1990" name="Mol. Cell. Biol.">
        <title>Transcription of the procyclic acidic repetitive protein genes of Trypanosoma brucei.</title>
        <authorList>
            <person name="Clayton C.E."/>
            <person name="Fueri J.P."/>
            <person name="Itzhaki J.E."/>
            <person name="Bellofatto V."/>
            <person name="Sherman D.R."/>
            <person name="Wisdom G.S."/>
            <person name="Vijayasarathy S."/>
            <person name="Mowatt M.R."/>
        </authorList>
    </citation>
    <scope>NUCLEOTIDE SEQUENCE [GENOMIC DNA]</scope>
</reference>
<reference key="2">
    <citation type="submission" date="1992-06" db="EMBL/GenBank/DDBJ databases">
        <authorList>
            <person name="Vijayasarathy S."/>
            <person name="Ernest I."/>
            <person name="Itzhaki J."/>
            <person name="Sherman D."/>
            <person name="Mowatt M.R."/>
            <person name="Michels P.A.M."/>
            <person name="Clayton C.E."/>
        </authorList>
    </citation>
    <scope>NUCLEOTIDE SEQUENCE</scope>
    <source>
        <strain>427</strain>
    </source>
</reference>
<reference key="3">
    <citation type="journal article" date="1993" name="J. Biol. Chem.">
        <title>Cloning of a novel surface antigen from the insect stages of Trypanosoma brucei by expression in COS cells.</title>
        <authorList>
            <person name="Jackson D.G."/>
            <person name="Smith D.K."/>
            <person name="Luo C."/>
            <person name="Elliott J.F."/>
        </authorList>
    </citation>
    <scope>NUCLEOTIDE SEQUENCE [MRNA]</scope>
</reference>
<organism>
    <name type="scientific">Trypanosoma brucei brucei</name>
    <dbReference type="NCBI Taxonomy" id="5702"/>
    <lineage>
        <taxon>Eukaryota</taxon>
        <taxon>Discoba</taxon>
        <taxon>Euglenozoa</taxon>
        <taxon>Kinetoplastea</taxon>
        <taxon>Metakinetoplastina</taxon>
        <taxon>Trypanosomatida</taxon>
        <taxon>Trypanosomatidae</taxon>
        <taxon>Trypanosoma</taxon>
    </lineage>
</organism>
<dbReference type="EMBL" id="M33130">
    <property type="protein sequence ID" value="AAA30226.1"/>
    <property type="molecule type" value="Genomic_DNA"/>
</dbReference>
<dbReference type="EMBL" id="X52585">
    <property type="protein sequence ID" value="CAA36816.1"/>
    <property type="molecule type" value="Genomic_DNA"/>
</dbReference>
<dbReference type="EMBL" id="L02933">
    <property type="protein sequence ID" value="AAA30228.1"/>
    <property type="molecule type" value="mRNA"/>
</dbReference>
<dbReference type="PIR" id="A44418">
    <property type="entry name" value="A44418"/>
</dbReference>
<dbReference type="GO" id="GO:0005886">
    <property type="term" value="C:plasma membrane"/>
    <property type="evidence" value="ECO:0007669"/>
    <property type="project" value="UniProtKB-SubCell"/>
</dbReference>
<dbReference type="GO" id="GO:0098552">
    <property type="term" value="C:side of membrane"/>
    <property type="evidence" value="ECO:0007669"/>
    <property type="project" value="UniProtKB-KW"/>
</dbReference>
<dbReference type="InterPro" id="IPR050972">
    <property type="entry name" value="SDr-like"/>
</dbReference>
<dbReference type="InterPro" id="IPR008882">
    <property type="entry name" value="Trypano_PARP"/>
</dbReference>
<dbReference type="PANTHER" id="PTHR34403:SF14">
    <property type="entry name" value="OS05G0225800 PROTEIN"/>
    <property type="match status" value="1"/>
</dbReference>
<dbReference type="PANTHER" id="PTHR34403">
    <property type="entry name" value="TOL-PAL SYSTEM PROTEIN TOLA"/>
    <property type="match status" value="1"/>
</dbReference>
<dbReference type="Pfam" id="PF05887">
    <property type="entry name" value="Trypan_PARP"/>
    <property type="match status" value="2"/>
</dbReference>
<gene>
    <name type="primary">PARPB</name>
</gene>
<name>PARC_TRYBB</name>
<protein>
    <recommendedName>
        <fullName>Procyclic form-specific polypeptide B-alpha</fullName>
    </recommendedName>
    <alternativeName>
        <fullName>PARP B-alpha</fullName>
    </alternativeName>
    <alternativeName>
        <fullName>PSSA-1</fullName>
    </alternativeName>
    <alternativeName>
        <fullName>Procyclin</fullName>
    </alternativeName>
</protein>
<feature type="signal peptide" evidence="1">
    <location>
        <begin position="1"/>
        <end position="27"/>
    </location>
</feature>
<feature type="chain" id="PRO_0000022015" description="Procyclic form-specific polypeptide B-alpha">
    <location>
        <begin position="28"/>
        <end position="123"/>
    </location>
</feature>
<feature type="propeptide" id="PRO_0000022016" evidence="1">
    <location>
        <begin position="124"/>
        <end position="145"/>
    </location>
</feature>
<feature type="repeat" description="1">
    <location>
        <begin position="59"/>
        <end position="60"/>
    </location>
</feature>
<feature type="repeat" description="2">
    <location>
        <begin position="61"/>
        <end position="62"/>
    </location>
</feature>
<feature type="repeat" description="3">
    <location>
        <begin position="63"/>
        <end position="64"/>
    </location>
</feature>
<feature type="repeat" description="4">
    <location>
        <begin position="65"/>
        <end position="66"/>
    </location>
</feature>
<feature type="repeat" description="5">
    <location>
        <begin position="67"/>
        <end position="68"/>
    </location>
</feature>
<feature type="repeat" description="6">
    <location>
        <begin position="69"/>
        <end position="70"/>
    </location>
</feature>
<feature type="repeat" description="7">
    <location>
        <begin position="71"/>
        <end position="72"/>
    </location>
</feature>
<feature type="repeat" description="8">
    <location>
        <begin position="73"/>
        <end position="74"/>
    </location>
</feature>
<feature type="repeat" description="9">
    <location>
        <begin position="75"/>
        <end position="76"/>
    </location>
</feature>
<feature type="repeat" description="10">
    <location>
        <begin position="77"/>
        <end position="78"/>
    </location>
</feature>
<feature type="repeat" description="11">
    <location>
        <begin position="79"/>
        <end position="80"/>
    </location>
</feature>
<feature type="repeat" description="12">
    <location>
        <begin position="81"/>
        <end position="82"/>
    </location>
</feature>
<feature type="repeat" description="13">
    <location>
        <begin position="83"/>
        <end position="84"/>
    </location>
</feature>
<feature type="repeat" description="14">
    <location>
        <begin position="85"/>
        <end position="86"/>
    </location>
</feature>
<feature type="repeat" description="15">
    <location>
        <begin position="87"/>
        <end position="88"/>
    </location>
</feature>
<feature type="repeat" description="16">
    <location>
        <begin position="89"/>
        <end position="90"/>
    </location>
</feature>
<feature type="repeat" description="17">
    <location>
        <begin position="91"/>
        <end position="92"/>
    </location>
</feature>
<feature type="repeat" description="18">
    <location>
        <begin position="93"/>
        <end position="94"/>
    </location>
</feature>
<feature type="repeat" description="19">
    <location>
        <begin position="95"/>
        <end position="96"/>
    </location>
</feature>
<feature type="repeat" description="20">
    <location>
        <begin position="97"/>
        <end position="98"/>
    </location>
</feature>
<feature type="repeat" description="21">
    <location>
        <begin position="99"/>
        <end position="100"/>
    </location>
</feature>
<feature type="repeat" description="22">
    <location>
        <begin position="101"/>
        <end position="102"/>
    </location>
</feature>
<feature type="repeat" description="23">
    <location>
        <begin position="103"/>
        <end position="104"/>
    </location>
</feature>
<feature type="repeat" description="24">
    <location>
        <begin position="105"/>
        <end position="106"/>
    </location>
</feature>
<feature type="repeat" description="25">
    <location>
        <begin position="107"/>
        <end position="108"/>
    </location>
</feature>
<feature type="repeat" description="26">
    <location>
        <begin position="109"/>
        <end position="110"/>
    </location>
</feature>
<feature type="repeat" description="27">
    <location>
        <begin position="111"/>
        <end position="112"/>
    </location>
</feature>
<feature type="repeat" description="28">
    <location>
        <begin position="113"/>
        <end position="114"/>
    </location>
</feature>
<feature type="repeat" description="29">
    <location>
        <begin position="115"/>
        <end position="116"/>
    </location>
</feature>
<feature type="repeat" description="30">
    <location>
        <begin position="117"/>
        <end position="118"/>
    </location>
</feature>
<feature type="repeat" description="31">
    <location>
        <begin position="119"/>
        <end position="120"/>
    </location>
</feature>
<feature type="repeat" description="32">
    <location>
        <begin position="121"/>
        <end position="122"/>
    </location>
</feature>
<feature type="region of interest" description="Disordered" evidence="2">
    <location>
        <begin position="28"/>
        <end position="127"/>
    </location>
</feature>
<feature type="region of interest" description="32 X 2 AA tandem repeats of [DE]-P">
    <location>
        <begin position="59"/>
        <end position="122"/>
    </location>
</feature>
<feature type="compositionally biased region" description="Basic and acidic residues" evidence="2">
    <location>
        <begin position="31"/>
        <end position="52"/>
    </location>
</feature>
<feature type="compositionally biased region" description="Acidic residues" evidence="2">
    <location>
        <begin position="60"/>
        <end position="120"/>
    </location>
</feature>
<feature type="lipid moiety-binding region" description="GPI-anchor amidated glycine" evidence="1">
    <location>
        <position position="123"/>
    </location>
</feature>
<comment type="function">
    <text>Major surface antigen of procyclic forms.</text>
</comment>
<comment type="subcellular location">
    <subcellularLocation>
        <location>Cell membrane</location>
        <topology>Lipid-anchor</topology>
        <topology>GPI-anchor</topology>
    </subcellularLocation>
</comment>
<comment type="developmental stage">
    <text>Expressed only at a certain stage during differentiation in the insect vector.</text>
</comment>
<keyword id="KW-1003">Cell membrane</keyword>
<keyword id="KW-0325">Glycoprotein</keyword>
<keyword id="KW-0336">GPI-anchor</keyword>
<keyword id="KW-0449">Lipoprotein</keyword>
<keyword id="KW-0472">Membrane</keyword>
<keyword id="KW-0677">Repeat</keyword>
<keyword id="KW-0732">Signal</keyword>